<keyword id="KW-0012">Acyltransferase</keyword>
<keyword id="KW-0319">Glycerol metabolism</keyword>
<keyword id="KW-0444">Lipid biosynthesis</keyword>
<keyword id="KW-0443">Lipid metabolism</keyword>
<keyword id="KW-1185">Reference proteome</keyword>
<keyword id="KW-0808">Transferase</keyword>
<feature type="chain" id="PRO_0000222922" description="Putative diacyglycerol O-acyltransferase Mb3761c">
    <location>
        <begin position="1"/>
        <end position="454"/>
    </location>
</feature>
<feature type="active site" description="Proton acceptor" evidence="2">
    <location>
        <position position="139"/>
    </location>
</feature>
<sequence>MDLMMPNDSMFLFIESREHPMHVGGLSLFEPPQGAGPEFVREFTERLVANDEFQPMFRKHPATIGGGIARVAWAYDDDIDIDYHVRRSALPSPGRVRDLLELTSRLHTSLLDRHRPLWELHVVEGLNDGRFAMYTKMHHALIDGVSAMKLAQRTLSADPDDAEVRAIWNLPPRPRTRPPSDGSSLLDALFKMAGSVVGLAPSTLKLARAALLEQQLTLPFAAPHSMFNVKVGGARRCAAQSWSLDRIKSVKQAAGVTVNDAVLAMCAGALRYYLIERNALPDRPLIAMVPVSLRSKEDADAGGNLVGSVLCNLATHVDDPAQRIQTISASMDGNKKVLSELPQLQVLALSALNMAPLTLAGVPGFLSAVPPPFNIVISNVPGPVDPLYYGTARLDGSYPLSNIPDGQALNITLVNNAGNLDFGLVGCRRSVPHLQRLLAHLESSLKDLEQAVGI</sequence>
<comment type="catalytic activity">
    <reaction evidence="1">
        <text>an acyl-CoA + a 1,2-diacyl-sn-glycerol = a triacyl-sn-glycerol + CoA</text>
        <dbReference type="Rhea" id="RHEA:10868"/>
        <dbReference type="ChEBI" id="CHEBI:17815"/>
        <dbReference type="ChEBI" id="CHEBI:57287"/>
        <dbReference type="ChEBI" id="CHEBI:58342"/>
        <dbReference type="ChEBI" id="CHEBI:64615"/>
        <dbReference type="EC" id="2.3.1.20"/>
    </reaction>
</comment>
<comment type="pathway">
    <text>Glycerolipid metabolism; triacylglycerol biosynthesis.</text>
</comment>
<comment type="similarity">
    <text evidence="3">Belongs to the long-chain O-acyltransferase family.</text>
</comment>
<name>Y3761_MYCBO</name>
<evidence type="ECO:0000250" key="1">
    <source>
        <dbReference type="UniProtKB" id="P9WKC9"/>
    </source>
</evidence>
<evidence type="ECO:0000255" key="2"/>
<evidence type="ECO:0000305" key="3"/>
<dbReference type="EC" id="2.3.1.20" evidence="1"/>
<dbReference type="EMBL" id="LT708304">
    <property type="protein sequence ID" value="SIU02390.1"/>
    <property type="molecule type" value="Genomic_DNA"/>
</dbReference>
<dbReference type="RefSeq" id="NP_857399.1">
    <property type="nucleotide sequence ID" value="NC_002945.3"/>
</dbReference>
<dbReference type="RefSeq" id="WP_003420440.1">
    <property type="nucleotide sequence ID" value="NC_002945.4"/>
</dbReference>
<dbReference type="SMR" id="P67211"/>
<dbReference type="KEGG" id="mbo:BQ2027_MB3761C"/>
<dbReference type="PATRIC" id="fig|233413.5.peg.4116"/>
<dbReference type="UniPathway" id="UPA00282"/>
<dbReference type="Proteomes" id="UP000001419">
    <property type="component" value="Chromosome"/>
</dbReference>
<dbReference type="GO" id="GO:0005886">
    <property type="term" value="C:plasma membrane"/>
    <property type="evidence" value="ECO:0007669"/>
    <property type="project" value="TreeGrafter"/>
</dbReference>
<dbReference type="GO" id="GO:0004144">
    <property type="term" value="F:diacylglycerol O-acyltransferase activity"/>
    <property type="evidence" value="ECO:0007669"/>
    <property type="project" value="UniProtKB-EC"/>
</dbReference>
<dbReference type="GO" id="GO:0051701">
    <property type="term" value="P:biological process involved in interaction with host"/>
    <property type="evidence" value="ECO:0007669"/>
    <property type="project" value="TreeGrafter"/>
</dbReference>
<dbReference type="GO" id="GO:0006071">
    <property type="term" value="P:glycerol metabolic process"/>
    <property type="evidence" value="ECO:0007669"/>
    <property type="project" value="UniProtKB-KW"/>
</dbReference>
<dbReference type="GO" id="GO:0001666">
    <property type="term" value="P:response to hypoxia"/>
    <property type="evidence" value="ECO:0007669"/>
    <property type="project" value="TreeGrafter"/>
</dbReference>
<dbReference type="GO" id="GO:0071731">
    <property type="term" value="P:response to nitric oxide"/>
    <property type="evidence" value="ECO:0007669"/>
    <property type="project" value="TreeGrafter"/>
</dbReference>
<dbReference type="GO" id="GO:0019432">
    <property type="term" value="P:triglyceride biosynthetic process"/>
    <property type="evidence" value="ECO:0007669"/>
    <property type="project" value="UniProtKB-UniPathway"/>
</dbReference>
<dbReference type="InterPro" id="IPR014292">
    <property type="entry name" value="Acyl_transf_WS/DGAT"/>
</dbReference>
<dbReference type="InterPro" id="IPR045034">
    <property type="entry name" value="O-acyltransferase_WSD1-like"/>
</dbReference>
<dbReference type="InterPro" id="IPR009721">
    <property type="entry name" value="O-acyltransferase_WSD1_C"/>
</dbReference>
<dbReference type="InterPro" id="IPR004255">
    <property type="entry name" value="O-acyltransferase_WSD1_N"/>
</dbReference>
<dbReference type="NCBIfam" id="TIGR02946">
    <property type="entry name" value="acyl_WS_DGAT"/>
    <property type="match status" value="1"/>
</dbReference>
<dbReference type="PANTHER" id="PTHR31650">
    <property type="entry name" value="O-ACYLTRANSFERASE (WSD1-LIKE) FAMILY PROTEIN"/>
    <property type="match status" value="1"/>
</dbReference>
<dbReference type="PANTHER" id="PTHR31650:SF1">
    <property type="entry name" value="WAX ESTER SYNTHASE_DIACYLGLYCEROL ACYLTRANSFERASE 4-RELATED"/>
    <property type="match status" value="1"/>
</dbReference>
<dbReference type="Pfam" id="PF06974">
    <property type="entry name" value="WS_DGAT_C"/>
    <property type="match status" value="1"/>
</dbReference>
<dbReference type="Pfam" id="PF03007">
    <property type="entry name" value="WS_DGAT_cat"/>
    <property type="match status" value="1"/>
</dbReference>
<dbReference type="SUPFAM" id="SSF52777">
    <property type="entry name" value="CoA-dependent acyltransferases"/>
    <property type="match status" value="1"/>
</dbReference>
<proteinExistence type="inferred from homology"/>
<gene>
    <name type="ordered locus">BQ2027_MB3761C</name>
</gene>
<reference key="1">
    <citation type="journal article" date="2003" name="Proc. Natl. Acad. Sci. U.S.A.">
        <title>The complete genome sequence of Mycobacterium bovis.</title>
        <authorList>
            <person name="Garnier T."/>
            <person name="Eiglmeier K."/>
            <person name="Camus J.-C."/>
            <person name="Medina N."/>
            <person name="Mansoor H."/>
            <person name="Pryor M."/>
            <person name="Duthoy S."/>
            <person name="Grondin S."/>
            <person name="Lacroix C."/>
            <person name="Monsempe C."/>
            <person name="Simon S."/>
            <person name="Harris B."/>
            <person name="Atkin R."/>
            <person name="Doggett J."/>
            <person name="Mayes R."/>
            <person name="Keating L."/>
            <person name="Wheeler P.R."/>
            <person name="Parkhill J."/>
            <person name="Barrell B.G."/>
            <person name="Cole S.T."/>
            <person name="Gordon S.V."/>
            <person name="Hewinson R.G."/>
        </authorList>
    </citation>
    <scope>NUCLEOTIDE SEQUENCE [LARGE SCALE GENOMIC DNA]</scope>
    <source>
        <strain>ATCC BAA-935 / AF2122/97</strain>
    </source>
</reference>
<reference key="2">
    <citation type="journal article" date="2017" name="Genome Announc.">
        <title>Updated reference genome sequence and annotation of Mycobacterium bovis AF2122/97.</title>
        <authorList>
            <person name="Malone K.M."/>
            <person name="Farrell D."/>
            <person name="Stuber T.P."/>
            <person name="Schubert O.T."/>
            <person name="Aebersold R."/>
            <person name="Robbe-Austerman S."/>
            <person name="Gordon S.V."/>
        </authorList>
    </citation>
    <scope>NUCLEOTIDE SEQUENCE [LARGE SCALE GENOMIC DNA]</scope>
    <scope>GENOME REANNOTATION</scope>
    <source>
        <strain>ATCC BAA-935 / AF2122/97</strain>
    </source>
</reference>
<accession>P67211</accession>
<accession>A0A1R3Y505</accession>
<accession>O69701</accession>
<accession>X2BPF5</accession>
<organism>
    <name type="scientific">Mycobacterium bovis (strain ATCC BAA-935 / AF2122/97)</name>
    <dbReference type="NCBI Taxonomy" id="233413"/>
    <lineage>
        <taxon>Bacteria</taxon>
        <taxon>Bacillati</taxon>
        <taxon>Actinomycetota</taxon>
        <taxon>Actinomycetes</taxon>
        <taxon>Mycobacteriales</taxon>
        <taxon>Mycobacteriaceae</taxon>
        <taxon>Mycobacterium</taxon>
        <taxon>Mycobacterium tuberculosis complex</taxon>
    </lineage>
</organism>
<protein>
    <recommendedName>
        <fullName>Putative diacyglycerol O-acyltransferase Mb3761c</fullName>
        <ecNumber evidence="1">2.3.1.20</ecNumber>
    </recommendedName>
    <alternativeName>
        <fullName>Putative triacylglycerol synthase Mb3761c</fullName>
    </alternativeName>
</protein>